<gene>
    <name evidence="1" type="primary">pyrE</name>
    <name type="ordered locus">mma_0191</name>
</gene>
<organism>
    <name type="scientific">Janthinobacterium sp. (strain Marseille)</name>
    <name type="common">Minibacterium massiliensis</name>
    <dbReference type="NCBI Taxonomy" id="375286"/>
    <lineage>
        <taxon>Bacteria</taxon>
        <taxon>Pseudomonadati</taxon>
        <taxon>Pseudomonadota</taxon>
        <taxon>Betaproteobacteria</taxon>
        <taxon>Burkholderiales</taxon>
        <taxon>Oxalobacteraceae</taxon>
        <taxon>Janthinobacterium</taxon>
    </lineage>
</organism>
<feature type="chain" id="PRO_1000066242" description="Orotate phosphoribosyltransferase">
    <location>
        <begin position="1"/>
        <end position="221"/>
    </location>
</feature>
<feature type="binding site" description="in other chain" evidence="1">
    <location>
        <position position="26"/>
    </location>
    <ligand>
        <name>5-phospho-alpha-D-ribose 1-diphosphate</name>
        <dbReference type="ChEBI" id="CHEBI:58017"/>
        <note>ligand shared between dimeric partners</note>
    </ligand>
</feature>
<feature type="binding site" evidence="1">
    <location>
        <begin position="34"/>
        <end position="35"/>
    </location>
    <ligand>
        <name>orotate</name>
        <dbReference type="ChEBI" id="CHEBI:30839"/>
    </ligand>
</feature>
<feature type="binding site" description="in other chain" evidence="1">
    <location>
        <begin position="72"/>
        <end position="73"/>
    </location>
    <ligand>
        <name>5-phospho-alpha-D-ribose 1-diphosphate</name>
        <dbReference type="ChEBI" id="CHEBI:58017"/>
        <note>ligand shared between dimeric partners</note>
    </ligand>
</feature>
<feature type="binding site" evidence="1">
    <location>
        <position position="98"/>
    </location>
    <ligand>
        <name>5-phospho-alpha-D-ribose 1-diphosphate</name>
        <dbReference type="ChEBI" id="CHEBI:58017"/>
        <note>ligand shared between dimeric partners</note>
    </ligand>
</feature>
<feature type="binding site" description="in other chain" evidence="1">
    <location>
        <position position="99"/>
    </location>
    <ligand>
        <name>5-phospho-alpha-D-ribose 1-diphosphate</name>
        <dbReference type="ChEBI" id="CHEBI:58017"/>
        <note>ligand shared between dimeric partners</note>
    </ligand>
</feature>
<feature type="binding site" evidence="1">
    <location>
        <position position="102"/>
    </location>
    <ligand>
        <name>5-phospho-alpha-D-ribose 1-diphosphate</name>
        <dbReference type="ChEBI" id="CHEBI:58017"/>
        <note>ligand shared between dimeric partners</note>
    </ligand>
</feature>
<feature type="binding site" evidence="1">
    <location>
        <position position="104"/>
    </location>
    <ligand>
        <name>5-phospho-alpha-D-ribose 1-diphosphate</name>
        <dbReference type="ChEBI" id="CHEBI:58017"/>
        <note>ligand shared between dimeric partners</note>
    </ligand>
</feature>
<feature type="binding site" description="in other chain" evidence="1">
    <location>
        <begin position="123"/>
        <end position="131"/>
    </location>
    <ligand>
        <name>5-phospho-alpha-D-ribose 1-diphosphate</name>
        <dbReference type="ChEBI" id="CHEBI:58017"/>
        <note>ligand shared between dimeric partners</note>
    </ligand>
</feature>
<feature type="binding site" evidence="1">
    <location>
        <position position="127"/>
    </location>
    <ligand>
        <name>orotate</name>
        <dbReference type="ChEBI" id="CHEBI:30839"/>
    </ligand>
</feature>
<feature type="binding site" evidence="1">
    <location>
        <position position="155"/>
    </location>
    <ligand>
        <name>orotate</name>
        <dbReference type="ChEBI" id="CHEBI:30839"/>
    </ligand>
</feature>
<protein>
    <recommendedName>
        <fullName evidence="1">Orotate phosphoribosyltransferase</fullName>
        <shortName evidence="1">OPRT</shortName>
        <shortName evidence="1">OPRTase</shortName>
        <ecNumber evidence="1">2.4.2.10</ecNumber>
    </recommendedName>
</protein>
<keyword id="KW-0328">Glycosyltransferase</keyword>
<keyword id="KW-0460">Magnesium</keyword>
<keyword id="KW-0665">Pyrimidine biosynthesis</keyword>
<keyword id="KW-0808">Transferase</keyword>
<dbReference type="EC" id="2.4.2.10" evidence="1"/>
<dbReference type="EMBL" id="CP000269">
    <property type="protein sequence ID" value="ABR88272.1"/>
    <property type="molecule type" value="Genomic_DNA"/>
</dbReference>
<dbReference type="RefSeq" id="WP_011979417.1">
    <property type="nucleotide sequence ID" value="NC_009659.1"/>
</dbReference>
<dbReference type="SMR" id="A6SUD4"/>
<dbReference type="STRING" id="375286.mma_0191"/>
<dbReference type="KEGG" id="mms:mma_0191"/>
<dbReference type="eggNOG" id="COG0461">
    <property type="taxonomic scope" value="Bacteria"/>
</dbReference>
<dbReference type="HOGENOM" id="CLU_074878_0_1_4"/>
<dbReference type="OrthoDB" id="9779060at2"/>
<dbReference type="UniPathway" id="UPA00070">
    <property type="reaction ID" value="UER00119"/>
</dbReference>
<dbReference type="Proteomes" id="UP000006388">
    <property type="component" value="Chromosome"/>
</dbReference>
<dbReference type="GO" id="GO:0005737">
    <property type="term" value="C:cytoplasm"/>
    <property type="evidence" value="ECO:0007669"/>
    <property type="project" value="TreeGrafter"/>
</dbReference>
<dbReference type="GO" id="GO:0000287">
    <property type="term" value="F:magnesium ion binding"/>
    <property type="evidence" value="ECO:0007669"/>
    <property type="project" value="UniProtKB-UniRule"/>
</dbReference>
<dbReference type="GO" id="GO:0004588">
    <property type="term" value="F:orotate phosphoribosyltransferase activity"/>
    <property type="evidence" value="ECO:0007669"/>
    <property type="project" value="UniProtKB-UniRule"/>
</dbReference>
<dbReference type="GO" id="GO:0006207">
    <property type="term" value="P:'de novo' pyrimidine nucleobase biosynthetic process"/>
    <property type="evidence" value="ECO:0007669"/>
    <property type="project" value="TreeGrafter"/>
</dbReference>
<dbReference type="GO" id="GO:0044205">
    <property type="term" value="P:'de novo' UMP biosynthetic process"/>
    <property type="evidence" value="ECO:0007669"/>
    <property type="project" value="UniProtKB-UniRule"/>
</dbReference>
<dbReference type="GO" id="GO:0046132">
    <property type="term" value="P:pyrimidine ribonucleoside biosynthetic process"/>
    <property type="evidence" value="ECO:0007669"/>
    <property type="project" value="TreeGrafter"/>
</dbReference>
<dbReference type="CDD" id="cd06223">
    <property type="entry name" value="PRTases_typeI"/>
    <property type="match status" value="1"/>
</dbReference>
<dbReference type="FunFam" id="3.40.50.2020:FF:000008">
    <property type="entry name" value="Orotate phosphoribosyltransferase"/>
    <property type="match status" value="1"/>
</dbReference>
<dbReference type="Gene3D" id="3.40.50.2020">
    <property type="match status" value="1"/>
</dbReference>
<dbReference type="HAMAP" id="MF_01208">
    <property type="entry name" value="PyrE"/>
    <property type="match status" value="1"/>
</dbReference>
<dbReference type="InterPro" id="IPR023031">
    <property type="entry name" value="OPRT"/>
</dbReference>
<dbReference type="InterPro" id="IPR004467">
    <property type="entry name" value="Or_phspho_trans_dom"/>
</dbReference>
<dbReference type="InterPro" id="IPR000836">
    <property type="entry name" value="PRibTrfase_dom"/>
</dbReference>
<dbReference type="InterPro" id="IPR029057">
    <property type="entry name" value="PRTase-like"/>
</dbReference>
<dbReference type="NCBIfam" id="TIGR00336">
    <property type="entry name" value="pyrE"/>
    <property type="match status" value="1"/>
</dbReference>
<dbReference type="PANTHER" id="PTHR46683">
    <property type="entry name" value="OROTATE PHOSPHORIBOSYLTRANSFERASE 1-RELATED"/>
    <property type="match status" value="1"/>
</dbReference>
<dbReference type="PANTHER" id="PTHR46683:SF1">
    <property type="entry name" value="OROTATE PHOSPHORIBOSYLTRANSFERASE 1-RELATED"/>
    <property type="match status" value="1"/>
</dbReference>
<dbReference type="Pfam" id="PF00156">
    <property type="entry name" value="Pribosyltran"/>
    <property type="match status" value="1"/>
</dbReference>
<dbReference type="SUPFAM" id="SSF53271">
    <property type="entry name" value="PRTase-like"/>
    <property type="match status" value="1"/>
</dbReference>
<dbReference type="PROSITE" id="PS00103">
    <property type="entry name" value="PUR_PYR_PR_TRANSFER"/>
    <property type="match status" value="1"/>
</dbReference>
<reference key="1">
    <citation type="journal article" date="2007" name="PLoS Genet.">
        <title>Genome analysis of Minibacterium massiliensis highlights the convergent evolution of water-living bacteria.</title>
        <authorList>
            <person name="Audic S."/>
            <person name="Robert C."/>
            <person name="Campagna B."/>
            <person name="Parinello H."/>
            <person name="Claverie J.-M."/>
            <person name="Raoult D."/>
            <person name="Drancourt M."/>
        </authorList>
    </citation>
    <scope>NUCLEOTIDE SEQUENCE [LARGE SCALE GENOMIC DNA]</scope>
    <source>
        <strain>Marseille</strain>
    </source>
</reference>
<name>PYRE_JANMA</name>
<accession>A6SUD4</accession>
<proteinExistence type="inferred from homology"/>
<evidence type="ECO:0000255" key="1">
    <source>
        <dbReference type="HAMAP-Rule" id="MF_01208"/>
    </source>
</evidence>
<sequence length="221" mass="23682">MNNLRQEFIKFSVETGVLRFGEFVTKAGRTSPYFFNAGLFNQGRTLAMLAEFYAQTLIDSGIEFDMLFGPAYKGITLASATAVALANKGRDVSFAFNRKEAKDHGEGGTMVGAKLQGRVVIIDDVISAGTSVRESVDMIRAAGATPCAVMIALDRMERSGADGALSAHSAVQEVSNTYGMPVVSIGNLSDLFEYLSNAGADSEQAKYKEAVAAYRQRYGVA</sequence>
<comment type="function">
    <text evidence="1">Catalyzes the transfer of a ribosyl phosphate group from 5-phosphoribose 1-diphosphate to orotate, leading to the formation of orotidine monophosphate (OMP).</text>
</comment>
<comment type="catalytic activity">
    <reaction evidence="1">
        <text>orotidine 5'-phosphate + diphosphate = orotate + 5-phospho-alpha-D-ribose 1-diphosphate</text>
        <dbReference type="Rhea" id="RHEA:10380"/>
        <dbReference type="ChEBI" id="CHEBI:30839"/>
        <dbReference type="ChEBI" id="CHEBI:33019"/>
        <dbReference type="ChEBI" id="CHEBI:57538"/>
        <dbReference type="ChEBI" id="CHEBI:58017"/>
        <dbReference type="EC" id="2.4.2.10"/>
    </reaction>
</comment>
<comment type="cofactor">
    <cofactor evidence="1">
        <name>Mg(2+)</name>
        <dbReference type="ChEBI" id="CHEBI:18420"/>
    </cofactor>
</comment>
<comment type="pathway">
    <text evidence="1">Pyrimidine metabolism; UMP biosynthesis via de novo pathway; UMP from orotate: step 1/2.</text>
</comment>
<comment type="subunit">
    <text evidence="1">Homodimer.</text>
</comment>
<comment type="similarity">
    <text evidence="1">Belongs to the purine/pyrimidine phosphoribosyltransferase family. PyrE subfamily.</text>
</comment>